<accession>B4ECX5</accession>
<protein>
    <recommendedName>
        <fullName evidence="1">Homogentisate 1,2-dioxygenase</fullName>
        <shortName evidence="1">HGDO</shortName>
        <ecNumber evidence="1">1.13.11.5</ecNumber>
    </recommendedName>
    <alternativeName>
        <fullName evidence="1">Homogentisate oxygenase</fullName>
    </alternativeName>
    <alternativeName>
        <fullName evidence="1">Homogentisic acid oxidase</fullName>
    </alternativeName>
    <alternativeName>
        <fullName evidence="1">Homogentisicase</fullName>
    </alternativeName>
</protein>
<name>HGD_BURCJ</name>
<evidence type="ECO:0000255" key="1">
    <source>
        <dbReference type="HAMAP-Rule" id="MF_00334"/>
    </source>
</evidence>
<organism>
    <name type="scientific">Burkholderia cenocepacia (strain ATCC BAA-245 / DSM 16553 / LMG 16656 / NCTC 13227 / J2315 / CF5610)</name>
    <name type="common">Burkholderia cepacia (strain J2315)</name>
    <dbReference type="NCBI Taxonomy" id="216591"/>
    <lineage>
        <taxon>Bacteria</taxon>
        <taxon>Pseudomonadati</taxon>
        <taxon>Pseudomonadota</taxon>
        <taxon>Betaproteobacteria</taxon>
        <taxon>Burkholderiales</taxon>
        <taxon>Burkholderiaceae</taxon>
        <taxon>Burkholderia</taxon>
        <taxon>Burkholderia cepacia complex</taxon>
    </lineage>
</organism>
<reference key="1">
    <citation type="journal article" date="2009" name="J. Bacteriol.">
        <title>The genome of Burkholderia cenocepacia J2315, an epidemic pathogen of cystic fibrosis patients.</title>
        <authorList>
            <person name="Holden M.T."/>
            <person name="Seth-Smith H.M."/>
            <person name="Crossman L.C."/>
            <person name="Sebaihia M."/>
            <person name="Bentley S.D."/>
            <person name="Cerdeno-Tarraga A.M."/>
            <person name="Thomson N.R."/>
            <person name="Bason N."/>
            <person name="Quail M.A."/>
            <person name="Sharp S."/>
            <person name="Cherevach I."/>
            <person name="Churcher C."/>
            <person name="Goodhead I."/>
            <person name="Hauser H."/>
            <person name="Holroyd N."/>
            <person name="Mungall K."/>
            <person name="Scott P."/>
            <person name="Walker D."/>
            <person name="White B."/>
            <person name="Rose H."/>
            <person name="Iversen P."/>
            <person name="Mil-Homens D."/>
            <person name="Rocha E.P."/>
            <person name="Fialho A.M."/>
            <person name="Baldwin A."/>
            <person name="Dowson C."/>
            <person name="Barrell B.G."/>
            <person name="Govan J.R."/>
            <person name="Vandamme P."/>
            <person name="Hart C.A."/>
            <person name="Mahenthiralingam E."/>
            <person name="Parkhill J."/>
        </authorList>
    </citation>
    <scope>NUCLEOTIDE SEQUENCE [LARGE SCALE GENOMIC DNA]</scope>
    <source>
        <strain>ATCC BAA-245 / DSM 16553 / LMG 16656 / NCTC 13227 / J2315 / CF5610</strain>
    </source>
</reference>
<proteinExistence type="inferred from homology"/>
<comment type="function">
    <text evidence="1">Involved in the catabolism of homogentisate (2,5-dihydroxyphenylacetate or 2,5-OH-PhAc), a central intermediate in the degradation of phenylalanine and tyrosine. Catalyzes the oxidative ring cleavage of the aromatic ring of homogentisate to yield maleylacetoacetate.</text>
</comment>
<comment type="catalytic activity">
    <reaction evidence="1">
        <text>homogentisate + O2 = 4-maleylacetoacetate + H(+)</text>
        <dbReference type="Rhea" id="RHEA:15449"/>
        <dbReference type="ChEBI" id="CHEBI:15378"/>
        <dbReference type="ChEBI" id="CHEBI:15379"/>
        <dbReference type="ChEBI" id="CHEBI:16169"/>
        <dbReference type="ChEBI" id="CHEBI:17105"/>
        <dbReference type="EC" id="1.13.11.5"/>
    </reaction>
</comment>
<comment type="cofactor">
    <cofactor evidence="1">
        <name>Fe cation</name>
        <dbReference type="ChEBI" id="CHEBI:24875"/>
    </cofactor>
</comment>
<comment type="pathway">
    <text evidence="1">Amino-acid degradation; L-phenylalanine degradation; acetoacetate and fumarate from L-phenylalanine: step 4/6.</text>
</comment>
<comment type="subunit">
    <text evidence="1">Hexamer; dimer of trimers.</text>
</comment>
<comment type="similarity">
    <text evidence="1">Belongs to the homogentisate dioxygenase family.</text>
</comment>
<dbReference type="EC" id="1.13.11.5" evidence="1"/>
<dbReference type="EMBL" id="AM747720">
    <property type="protein sequence ID" value="CAR53507.1"/>
    <property type="molecule type" value="Genomic_DNA"/>
</dbReference>
<dbReference type="RefSeq" id="WP_006484957.1">
    <property type="nucleotide sequence ID" value="NC_011000.1"/>
</dbReference>
<dbReference type="SMR" id="B4ECX5"/>
<dbReference type="KEGG" id="bcj:BCAL3184"/>
<dbReference type="eggNOG" id="COG3508">
    <property type="taxonomic scope" value="Bacteria"/>
</dbReference>
<dbReference type="HOGENOM" id="CLU_027174_0_0_4"/>
<dbReference type="BioCyc" id="BCEN216591:G1G1V-3530-MONOMER"/>
<dbReference type="UniPathway" id="UPA00139">
    <property type="reaction ID" value="UER00339"/>
</dbReference>
<dbReference type="Proteomes" id="UP000001035">
    <property type="component" value="Chromosome 1"/>
</dbReference>
<dbReference type="GO" id="GO:0005737">
    <property type="term" value="C:cytoplasm"/>
    <property type="evidence" value="ECO:0007669"/>
    <property type="project" value="TreeGrafter"/>
</dbReference>
<dbReference type="GO" id="GO:0004411">
    <property type="term" value="F:homogentisate 1,2-dioxygenase activity"/>
    <property type="evidence" value="ECO:0007669"/>
    <property type="project" value="UniProtKB-UniRule"/>
</dbReference>
<dbReference type="GO" id="GO:0005506">
    <property type="term" value="F:iron ion binding"/>
    <property type="evidence" value="ECO:0007669"/>
    <property type="project" value="UniProtKB-UniRule"/>
</dbReference>
<dbReference type="GO" id="GO:0006559">
    <property type="term" value="P:L-phenylalanine catabolic process"/>
    <property type="evidence" value="ECO:0007669"/>
    <property type="project" value="UniProtKB-UniRule"/>
</dbReference>
<dbReference type="GO" id="GO:0006572">
    <property type="term" value="P:tyrosine catabolic process"/>
    <property type="evidence" value="ECO:0007669"/>
    <property type="project" value="UniProtKB-UniRule"/>
</dbReference>
<dbReference type="CDD" id="cd07000">
    <property type="entry name" value="cupin_HGO_N"/>
    <property type="match status" value="1"/>
</dbReference>
<dbReference type="FunFam" id="2.60.120.10:FF:000034">
    <property type="entry name" value="Homogentisate 1,2-dioxygenase"/>
    <property type="match status" value="1"/>
</dbReference>
<dbReference type="Gene3D" id="2.60.120.10">
    <property type="entry name" value="Jelly Rolls"/>
    <property type="match status" value="1"/>
</dbReference>
<dbReference type="HAMAP" id="MF_00334">
    <property type="entry name" value="Homogentis_dioxygen"/>
    <property type="match status" value="1"/>
</dbReference>
<dbReference type="InterPro" id="IPR046451">
    <property type="entry name" value="HgmA_C"/>
</dbReference>
<dbReference type="InterPro" id="IPR046452">
    <property type="entry name" value="HgmA_N"/>
</dbReference>
<dbReference type="InterPro" id="IPR005708">
    <property type="entry name" value="Homogentis_dOase"/>
</dbReference>
<dbReference type="InterPro" id="IPR022950">
    <property type="entry name" value="Homogentis_dOase_bac"/>
</dbReference>
<dbReference type="InterPro" id="IPR014710">
    <property type="entry name" value="RmlC-like_jellyroll"/>
</dbReference>
<dbReference type="InterPro" id="IPR011051">
    <property type="entry name" value="RmlC_Cupin_sf"/>
</dbReference>
<dbReference type="NCBIfam" id="TIGR01015">
    <property type="entry name" value="hmgA"/>
    <property type="match status" value="1"/>
</dbReference>
<dbReference type="PANTHER" id="PTHR11056">
    <property type="entry name" value="HOMOGENTISATE 1,2-DIOXYGENASE"/>
    <property type="match status" value="1"/>
</dbReference>
<dbReference type="PANTHER" id="PTHR11056:SF0">
    <property type="entry name" value="HOMOGENTISATE 1,2-DIOXYGENASE"/>
    <property type="match status" value="1"/>
</dbReference>
<dbReference type="Pfam" id="PF04209">
    <property type="entry name" value="HgmA_C"/>
    <property type="match status" value="1"/>
</dbReference>
<dbReference type="Pfam" id="PF20510">
    <property type="entry name" value="HgmA_N"/>
    <property type="match status" value="1"/>
</dbReference>
<dbReference type="SUPFAM" id="SSF51182">
    <property type="entry name" value="RmlC-like cupins"/>
    <property type="match status" value="1"/>
</dbReference>
<keyword id="KW-0223">Dioxygenase</keyword>
<keyword id="KW-0408">Iron</keyword>
<keyword id="KW-0479">Metal-binding</keyword>
<keyword id="KW-0560">Oxidoreductase</keyword>
<keyword id="KW-0585">Phenylalanine catabolism</keyword>
<keyword id="KW-0828">Tyrosine catabolism</keyword>
<gene>
    <name evidence="1" type="primary">hmgA</name>
    <name type="ordered locus">BceJ2315_31290</name>
    <name type="ORF">BCAL3184</name>
</gene>
<feature type="chain" id="PRO_1000119842" description="Homogentisate 1,2-dioxygenase">
    <location>
        <begin position="1"/>
        <end position="444"/>
    </location>
</feature>
<feature type="active site" description="Proton acceptor" evidence="1">
    <location>
        <position position="298"/>
    </location>
</feature>
<feature type="binding site" evidence="1">
    <location>
        <position position="341"/>
    </location>
    <ligand>
        <name>Fe cation</name>
        <dbReference type="ChEBI" id="CHEBI:24875"/>
    </ligand>
</feature>
<feature type="binding site" evidence="1">
    <location>
        <position position="347"/>
    </location>
    <ligand>
        <name>Fe cation</name>
        <dbReference type="ChEBI" id="CHEBI:24875"/>
    </ligand>
</feature>
<feature type="binding site" evidence="1">
    <location>
        <position position="356"/>
    </location>
    <ligand>
        <name>homogentisate</name>
        <dbReference type="ChEBI" id="CHEBI:16169"/>
    </ligand>
</feature>
<feature type="binding site" evidence="1">
    <location>
        <position position="377"/>
    </location>
    <ligand>
        <name>Fe cation</name>
        <dbReference type="ChEBI" id="CHEBI:24875"/>
    </ligand>
</feature>
<feature type="binding site" evidence="1">
    <location>
        <position position="377"/>
    </location>
    <ligand>
        <name>homogentisate</name>
        <dbReference type="ChEBI" id="CHEBI:16169"/>
    </ligand>
</feature>
<sequence>MTLDLSKPATAGYLSGFANEFATEALPGALPHGRNSPQRAPYGLYAEQLSGTAFTAPRGHNRRSWLYRIRPAAVHRPFEPYAGAQRLVSEFGDSADVPPTPPNQLRWDPLPMPVEPTDFVDGLVTMAGNGSAAAMNGCAIHLYAANRSMQDRFFYSADGELLIVPQQGRLFIATEFGRLDVEPFEIAVIPRGVRFAVALPDGDARGYICENFGALLRLPDLGPIGSNGLANPRDFLTPQAAYEDREGAFELIAKLNGRLWRADIGHSPLDVVAWHGNYAPYKYDLRLFNTIGSISFDHPDPSIFLVLQAQSDTPGVDTIDFVIFPPRWLAAEDTFRPPWFHRNVASEFMGLVHGAYDAKAEGFVPGGASLHNCMSGHRPDADTFEKASVSDTTKPHKVDATMAFMFETRTLIRPTRYALDTAQLQADYFECWQGIKKHFNPEQR</sequence>